<sequence>MQDSALERTRIAAVNAARAARASYRAGTVQPTAGIAPGMTQANMIALPRDWAWDFLLYAQRNPKACPVLDVIEAGAQQTVLAQGADIRTDIPLYRVWRDGKLAEEVADATPLWTEHPDLVTFLIGCSFTFETPLQEAGIEVRHIADGSNVPMYRTNRQCRPAGRLHGEMVVSMRPIPAHRVADAVSISGRFPSVHGSPVHVGDPAALGIADLARPDFGDAVRIEPGEIPVFWACGVTPQAAVMASGVPFAVTHAPGHMFITDVPDSTYHV</sequence>
<accession>Q0K0D3</accession>
<name>Y5759_CUPNH</name>
<dbReference type="EC" id="4.2.1.-" evidence="1"/>
<dbReference type="EMBL" id="AM260480">
    <property type="protein sequence ID" value="CAJ96541.1"/>
    <property type="molecule type" value="Genomic_DNA"/>
</dbReference>
<dbReference type="RefSeq" id="WP_010810235.1">
    <property type="nucleotide sequence ID" value="NZ_CP039288.1"/>
</dbReference>
<dbReference type="SMR" id="Q0K0D3"/>
<dbReference type="STRING" id="381666.H16_B1759"/>
<dbReference type="KEGG" id="reh:H16_B1759"/>
<dbReference type="eggNOG" id="COG4336">
    <property type="taxonomic scope" value="Bacteria"/>
</dbReference>
<dbReference type="HOGENOM" id="CLU_059759_0_0_4"/>
<dbReference type="OrthoDB" id="149585at2"/>
<dbReference type="Proteomes" id="UP000008210">
    <property type="component" value="Chromosome 2"/>
</dbReference>
<dbReference type="GO" id="GO:0016829">
    <property type="term" value="F:lyase activity"/>
    <property type="evidence" value="ECO:0007669"/>
    <property type="project" value="UniProtKB-KW"/>
</dbReference>
<dbReference type="FunFam" id="3.30.2040.10:FF:000001">
    <property type="entry name" value="D-glutamate cyclase, mitochondrial"/>
    <property type="match status" value="1"/>
</dbReference>
<dbReference type="Gene3D" id="3.40.1640.10">
    <property type="entry name" value="PSTPO5379-like"/>
    <property type="match status" value="1"/>
</dbReference>
<dbReference type="Gene3D" id="3.30.2040.10">
    <property type="entry name" value="PSTPO5379-like domain"/>
    <property type="match status" value="1"/>
</dbReference>
<dbReference type="HAMAP" id="MF_01830">
    <property type="entry name" value="Hydro_lyase"/>
    <property type="match status" value="1"/>
</dbReference>
<dbReference type="InterPro" id="IPR009906">
    <property type="entry name" value="D-Glu_cyclase"/>
</dbReference>
<dbReference type="InterPro" id="IPR038021">
    <property type="entry name" value="Putative_hydro-lyase"/>
</dbReference>
<dbReference type="InterPro" id="IPR016938">
    <property type="entry name" value="UPF0317"/>
</dbReference>
<dbReference type="NCBIfam" id="NF003969">
    <property type="entry name" value="PRK05463.1"/>
    <property type="match status" value="1"/>
</dbReference>
<dbReference type="PANTHER" id="PTHR32022">
    <property type="entry name" value="D-GLUTAMATE CYCLASE, MITOCHONDRIAL"/>
    <property type="match status" value="1"/>
</dbReference>
<dbReference type="PANTHER" id="PTHR32022:SF10">
    <property type="entry name" value="D-GLUTAMATE CYCLASE, MITOCHONDRIAL"/>
    <property type="match status" value="1"/>
</dbReference>
<dbReference type="Pfam" id="PF07286">
    <property type="entry name" value="D-Glu_cyclase"/>
    <property type="match status" value="1"/>
</dbReference>
<dbReference type="PIRSF" id="PIRSF029755">
    <property type="entry name" value="UCP029755"/>
    <property type="match status" value="1"/>
</dbReference>
<dbReference type="SUPFAM" id="SSF160920">
    <property type="entry name" value="PSTPO5379-like"/>
    <property type="match status" value="1"/>
</dbReference>
<proteinExistence type="inferred from homology"/>
<organism>
    <name type="scientific">Cupriavidus necator (strain ATCC 17699 / DSM 428 / KCTC 22496 / NCIMB 10442 / H16 / Stanier 337)</name>
    <name type="common">Ralstonia eutropha</name>
    <dbReference type="NCBI Taxonomy" id="381666"/>
    <lineage>
        <taxon>Bacteria</taxon>
        <taxon>Pseudomonadati</taxon>
        <taxon>Pseudomonadota</taxon>
        <taxon>Betaproteobacteria</taxon>
        <taxon>Burkholderiales</taxon>
        <taxon>Burkholderiaceae</taxon>
        <taxon>Cupriavidus</taxon>
    </lineage>
</organism>
<keyword id="KW-0456">Lyase</keyword>
<keyword id="KW-1185">Reference proteome</keyword>
<evidence type="ECO:0000255" key="1">
    <source>
        <dbReference type="HAMAP-Rule" id="MF_01830"/>
    </source>
</evidence>
<comment type="similarity">
    <text evidence="1">Belongs to the D-glutamate cyclase family.</text>
</comment>
<gene>
    <name type="ordered locus">H16_B1759</name>
</gene>
<protein>
    <recommendedName>
        <fullName evidence="1">Putative hydro-lyase H16_B1759</fullName>
        <ecNumber evidence="1">4.2.1.-</ecNumber>
    </recommendedName>
</protein>
<feature type="chain" id="PRO_0000379857" description="Putative hydro-lyase H16_B1759">
    <location>
        <begin position="1"/>
        <end position="270"/>
    </location>
</feature>
<reference key="1">
    <citation type="journal article" date="2006" name="Nat. Biotechnol.">
        <title>Genome sequence of the bioplastic-producing 'Knallgas' bacterium Ralstonia eutropha H16.</title>
        <authorList>
            <person name="Pohlmann A."/>
            <person name="Fricke W.F."/>
            <person name="Reinecke F."/>
            <person name="Kusian B."/>
            <person name="Liesegang H."/>
            <person name="Cramm R."/>
            <person name="Eitinger T."/>
            <person name="Ewering C."/>
            <person name="Poetter M."/>
            <person name="Schwartz E."/>
            <person name="Strittmatter A."/>
            <person name="Voss I."/>
            <person name="Gottschalk G."/>
            <person name="Steinbuechel A."/>
            <person name="Friedrich B."/>
            <person name="Bowien B."/>
        </authorList>
    </citation>
    <scope>NUCLEOTIDE SEQUENCE [LARGE SCALE GENOMIC DNA]</scope>
    <source>
        <strain>ATCC 17699 / DSM 428 / KCTC 22496 / NCIMB 10442 / H16 / Stanier 337</strain>
    </source>
</reference>